<dbReference type="EC" id="3.6.4.-" evidence="1"/>
<dbReference type="EMBL" id="M32364">
    <property type="protein sequence ID" value="AAA29205.1"/>
    <property type="molecule type" value="Genomic_DNA"/>
</dbReference>
<dbReference type="PIR" id="JQ0154">
    <property type="entry name" value="JQ0154"/>
</dbReference>
<dbReference type="RefSeq" id="XP_002154462.1">
    <property type="nucleotide sequence ID" value="XM_002154426.5"/>
</dbReference>
<dbReference type="RefSeq" id="XP_065655133.1">
    <property type="nucleotide sequence ID" value="XM_065799061.1"/>
</dbReference>
<dbReference type="SMR" id="P17126"/>
<dbReference type="EnsemblMetazoa" id="XM_002154426.4">
    <property type="protein sequence ID" value="XP_002154462.1"/>
    <property type="gene ID" value="LOC100202036"/>
</dbReference>
<dbReference type="GeneID" id="100202036"/>
<dbReference type="KEGG" id="hmg:100202036"/>
<dbReference type="OMA" id="STFQQKE"/>
<dbReference type="OrthoDB" id="6016663at2759"/>
<dbReference type="Proteomes" id="UP000694840">
    <property type="component" value="Unplaced"/>
</dbReference>
<dbReference type="GO" id="GO:0005737">
    <property type="term" value="C:cytoplasm"/>
    <property type="evidence" value="ECO:0007669"/>
    <property type="project" value="UniProtKB-KW"/>
</dbReference>
<dbReference type="GO" id="GO:0005856">
    <property type="term" value="C:cytoskeleton"/>
    <property type="evidence" value="ECO:0007669"/>
    <property type="project" value="UniProtKB-SubCell"/>
</dbReference>
<dbReference type="GO" id="GO:0005524">
    <property type="term" value="F:ATP binding"/>
    <property type="evidence" value="ECO:0007669"/>
    <property type="project" value="UniProtKB-KW"/>
</dbReference>
<dbReference type="GO" id="GO:0016787">
    <property type="term" value="F:hydrolase activity"/>
    <property type="evidence" value="ECO:0007669"/>
    <property type="project" value="UniProtKB-KW"/>
</dbReference>
<dbReference type="CDD" id="cd10224">
    <property type="entry name" value="ASKHA_NBD_actin"/>
    <property type="match status" value="1"/>
</dbReference>
<dbReference type="FunFam" id="2.30.36.70:FF:000001">
    <property type="entry name" value="Actin, alpha skeletal muscle"/>
    <property type="match status" value="1"/>
</dbReference>
<dbReference type="FunFam" id="3.30.420.40:FF:000131">
    <property type="entry name" value="Actin, alpha skeletal muscle"/>
    <property type="match status" value="1"/>
</dbReference>
<dbReference type="FunFam" id="3.30.420.40:FF:000291">
    <property type="entry name" value="Actin, alpha skeletal muscle"/>
    <property type="match status" value="1"/>
</dbReference>
<dbReference type="FunFam" id="3.90.640.10:FF:000047">
    <property type="entry name" value="Actin, alpha skeletal muscle"/>
    <property type="match status" value="1"/>
</dbReference>
<dbReference type="FunFam" id="3.30.420.40:FF:000058">
    <property type="entry name" value="Putative actin-related protein 5"/>
    <property type="match status" value="1"/>
</dbReference>
<dbReference type="Gene3D" id="3.30.420.40">
    <property type="match status" value="2"/>
</dbReference>
<dbReference type="Gene3D" id="3.90.640.10">
    <property type="entry name" value="Actin, Chain A, domain 4"/>
    <property type="match status" value="1"/>
</dbReference>
<dbReference type="InterPro" id="IPR004000">
    <property type="entry name" value="Actin"/>
</dbReference>
<dbReference type="InterPro" id="IPR020902">
    <property type="entry name" value="Actin/actin-like_CS"/>
</dbReference>
<dbReference type="InterPro" id="IPR004001">
    <property type="entry name" value="Actin_CS"/>
</dbReference>
<dbReference type="InterPro" id="IPR043129">
    <property type="entry name" value="ATPase_NBD"/>
</dbReference>
<dbReference type="PANTHER" id="PTHR11937">
    <property type="entry name" value="ACTIN"/>
    <property type="match status" value="1"/>
</dbReference>
<dbReference type="Pfam" id="PF00022">
    <property type="entry name" value="Actin"/>
    <property type="match status" value="1"/>
</dbReference>
<dbReference type="PRINTS" id="PR00190">
    <property type="entry name" value="ACTIN"/>
</dbReference>
<dbReference type="SMART" id="SM00268">
    <property type="entry name" value="ACTIN"/>
    <property type="match status" value="1"/>
</dbReference>
<dbReference type="SUPFAM" id="SSF53067">
    <property type="entry name" value="Actin-like ATPase domain"/>
    <property type="match status" value="2"/>
</dbReference>
<dbReference type="PROSITE" id="PS00406">
    <property type="entry name" value="ACTINS_1"/>
    <property type="match status" value="1"/>
</dbReference>
<dbReference type="PROSITE" id="PS00432">
    <property type="entry name" value="ACTINS_2"/>
    <property type="match status" value="1"/>
</dbReference>
<dbReference type="PROSITE" id="PS01132">
    <property type="entry name" value="ACTINS_ACT_LIKE"/>
    <property type="match status" value="1"/>
</dbReference>
<reference key="1">
    <citation type="journal article" date="1989" name="Gene">
        <title>Nucleotide sequence of an actin-encoding gene from Hydra attenuata: structural characteristics and evolutionary implications.</title>
        <authorList>
            <person name="Fisher D.A."/>
            <person name="Bode H.R."/>
        </authorList>
    </citation>
    <scope>NUCLEOTIDE SEQUENCE [GENOMIC DNA]</scope>
</reference>
<name>ACT_HYDVU</name>
<organism>
    <name type="scientific">Hydra vulgaris</name>
    <name type="common">Hydra</name>
    <name type="synonym">Hydra attenuata</name>
    <dbReference type="NCBI Taxonomy" id="6087"/>
    <lineage>
        <taxon>Eukaryota</taxon>
        <taxon>Metazoa</taxon>
        <taxon>Cnidaria</taxon>
        <taxon>Hydrozoa</taxon>
        <taxon>Hydroidolina</taxon>
        <taxon>Anthoathecata</taxon>
        <taxon>Aplanulata</taxon>
        <taxon>Hydridae</taxon>
        <taxon>Hydra</taxon>
    </lineage>
</organism>
<protein>
    <recommendedName>
        <fullName>Actin, non-muscle 6.2</fullName>
        <ecNumber evidence="1">3.6.4.-</ecNumber>
    </recommendedName>
</protein>
<proteinExistence type="inferred from homology"/>
<feature type="chain" id="PRO_0000088950" description="Actin, non-muscle 6.2">
    <location>
        <begin position="1"/>
        <end position="376"/>
    </location>
</feature>
<accession>P17126</accession>
<keyword id="KW-0067">ATP-binding</keyword>
<keyword id="KW-0963">Cytoplasm</keyword>
<keyword id="KW-0206">Cytoskeleton</keyword>
<keyword id="KW-0378">Hydrolase</keyword>
<keyword id="KW-0547">Nucleotide-binding</keyword>
<keyword id="KW-1185">Reference proteome</keyword>
<comment type="function">
    <text>Actins are highly conserved proteins that are involved in various types of cell motility and are ubiquitously expressed in all eukaryotic cells.</text>
</comment>
<comment type="catalytic activity">
    <reaction evidence="1">
        <text>ATP + H2O = ADP + phosphate + H(+)</text>
        <dbReference type="Rhea" id="RHEA:13065"/>
        <dbReference type="ChEBI" id="CHEBI:15377"/>
        <dbReference type="ChEBI" id="CHEBI:15378"/>
        <dbReference type="ChEBI" id="CHEBI:30616"/>
        <dbReference type="ChEBI" id="CHEBI:43474"/>
        <dbReference type="ChEBI" id="CHEBI:456216"/>
    </reaction>
</comment>
<comment type="subcellular location">
    <subcellularLocation>
        <location>Cytoplasm</location>
        <location>Cytoskeleton</location>
    </subcellularLocation>
</comment>
<comment type="similarity">
    <text evidence="2">Belongs to the actin family.</text>
</comment>
<evidence type="ECO:0000250" key="1">
    <source>
        <dbReference type="UniProtKB" id="P68137"/>
    </source>
</evidence>
<evidence type="ECO:0000305" key="2"/>
<sequence>MADDEVAALVVDNGSGMCKAGFAGDDAPRAVFPSIVGRPRHQGVMVGMGQKDSYVGDEAQSKRGILTLKYPIEHGIVTNWDDMEKIWHHTFYNELRVAPEEHPVLLTEAPLNPKANREKMTQIMFETFNSPAMYVAIQAVLSLYASGRTTGIVLDSGDGVSHTVPIYEGYALPHAIIRLDLAGRDLTDYLMKILTERGYSFTTTAEREIVRDIKEKLSYVALDFEQEMQTAASSSSLEKSYELPDGQVITIGNERFRCPETLFQPSFIGMESAGIHETTYNSIMKCDVDIRKDLYANTVLSGGTTMFPGIADRMQKEISALAPPTMKIKIIAPPERKYSVWIGGSILASLSTFQQMWISKQEYDESGPSIVHRKCF</sequence>